<accession>Q9F4F0</accession>
<gene>
    <name evidence="1" type="primary">groES</name>
    <name evidence="1" type="synonym">groS</name>
</gene>
<comment type="function">
    <text evidence="1">Together with the chaperonin GroEL, plays an essential role in assisting protein folding. The GroEL-GroES system forms a nano-cage that allows encapsulation of the non-native substrate proteins and provides a physical environment optimized to promote and accelerate protein folding. GroES binds to the apical surface of the GroEL ring, thereby capping the opening of the GroEL channel.</text>
</comment>
<comment type="subunit">
    <text evidence="1">Heptamer of 7 subunits arranged in a ring. Interacts with the chaperonin GroEL.</text>
</comment>
<comment type="subcellular location">
    <subcellularLocation>
        <location evidence="1">Cytoplasm</location>
    </subcellularLocation>
</comment>
<comment type="similarity">
    <text evidence="1">Belongs to the GroES chaperonin family.</text>
</comment>
<sequence length="97" mass="10366">MNIRPLHDRVIIKRQEVESKSAGGIVLTGSAAGKSTRGIVTAVGNGRVLDNGELKALDVKIGDTVIFSEGYGAKIEKIDNEEFLILTESDILAVVED</sequence>
<name>CH10_BUCPS</name>
<protein>
    <recommendedName>
        <fullName evidence="1">Co-chaperonin GroES</fullName>
    </recommendedName>
    <alternativeName>
        <fullName evidence="1">10 kDa chaperonin</fullName>
    </alternativeName>
    <alternativeName>
        <fullName evidence="1">Chaperonin-10</fullName>
        <shortName evidence="1">Cpn10</shortName>
    </alternativeName>
</protein>
<evidence type="ECO:0000255" key="1">
    <source>
        <dbReference type="HAMAP-Rule" id="MF_00580"/>
    </source>
</evidence>
<dbReference type="EMBL" id="AJ401307">
    <property type="protein sequence ID" value="CAC10477.1"/>
    <property type="molecule type" value="Genomic_DNA"/>
</dbReference>
<dbReference type="SMR" id="Q9F4F0"/>
<dbReference type="GO" id="GO:0005737">
    <property type="term" value="C:cytoplasm"/>
    <property type="evidence" value="ECO:0007669"/>
    <property type="project" value="UniProtKB-SubCell"/>
</dbReference>
<dbReference type="GO" id="GO:0005524">
    <property type="term" value="F:ATP binding"/>
    <property type="evidence" value="ECO:0007669"/>
    <property type="project" value="InterPro"/>
</dbReference>
<dbReference type="GO" id="GO:0046872">
    <property type="term" value="F:metal ion binding"/>
    <property type="evidence" value="ECO:0007669"/>
    <property type="project" value="TreeGrafter"/>
</dbReference>
<dbReference type="GO" id="GO:0044183">
    <property type="term" value="F:protein folding chaperone"/>
    <property type="evidence" value="ECO:0007669"/>
    <property type="project" value="InterPro"/>
</dbReference>
<dbReference type="GO" id="GO:0051087">
    <property type="term" value="F:protein-folding chaperone binding"/>
    <property type="evidence" value="ECO:0007669"/>
    <property type="project" value="TreeGrafter"/>
</dbReference>
<dbReference type="GO" id="GO:0051082">
    <property type="term" value="F:unfolded protein binding"/>
    <property type="evidence" value="ECO:0007669"/>
    <property type="project" value="TreeGrafter"/>
</dbReference>
<dbReference type="GO" id="GO:0051085">
    <property type="term" value="P:chaperone cofactor-dependent protein refolding"/>
    <property type="evidence" value="ECO:0007669"/>
    <property type="project" value="TreeGrafter"/>
</dbReference>
<dbReference type="CDD" id="cd00320">
    <property type="entry name" value="cpn10"/>
    <property type="match status" value="1"/>
</dbReference>
<dbReference type="FunFam" id="2.30.33.40:FF:000001">
    <property type="entry name" value="10 kDa chaperonin"/>
    <property type="match status" value="1"/>
</dbReference>
<dbReference type="Gene3D" id="2.30.33.40">
    <property type="entry name" value="GroES chaperonin"/>
    <property type="match status" value="1"/>
</dbReference>
<dbReference type="HAMAP" id="MF_00580">
    <property type="entry name" value="CH10"/>
    <property type="match status" value="1"/>
</dbReference>
<dbReference type="InterPro" id="IPR020818">
    <property type="entry name" value="Chaperonin_GroES"/>
</dbReference>
<dbReference type="InterPro" id="IPR037124">
    <property type="entry name" value="Chaperonin_GroES_sf"/>
</dbReference>
<dbReference type="InterPro" id="IPR018369">
    <property type="entry name" value="Chaprnonin_Cpn10_CS"/>
</dbReference>
<dbReference type="InterPro" id="IPR011032">
    <property type="entry name" value="GroES-like_sf"/>
</dbReference>
<dbReference type="NCBIfam" id="NF001526">
    <property type="entry name" value="PRK00364.1-1"/>
    <property type="match status" value="1"/>
</dbReference>
<dbReference type="NCBIfam" id="NF001531">
    <property type="entry name" value="PRK00364.2-2"/>
    <property type="match status" value="1"/>
</dbReference>
<dbReference type="PANTHER" id="PTHR10772">
    <property type="entry name" value="10 KDA HEAT SHOCK PROTEIN"/>
    <property type="match status" value="1"/>
</dbReference>
<dbReference type="PANTHER" id="PTHR10772:SF58">
    <property type="entry name" value="CO-CHAPERONIN GROES"/>
    <property type="match status" value="1"/>
</dbReference>
<dbReference type="Pfam" id="PF00166">
    <property type="entry name" value="Cpn10"/>
    <property type="match status" value="1"/>
</dbReference>
<dbReference type="PRINTS" id="PR00297">
    <property type="entry name" value="CHAPERONIN10"/>
</dbReference>
<dbReference type="SMART" id="SM00883">
    <property type="entry name" value="Cpn10"/>
    <property type="match status" value="1"/>
</dbReference>
<dbReference type="SUPFAM" id="SSF50129">
    <property type="entry name" value="GroES-like"/>
    <property type="match status" value="1"/>
</dbReference>
<dbReference type="PROSITE" id="PS00681">
    <property type="entry name" value="CHAPERONINS_CPN10"/>
    <property type="match status" value="1"/>
</dbReference>
<feature type="chain" id="PRO_0000174718" description="Co-chaperonin GroES">
    <location>
        <begin position="1"/>
        <end position="97"/>
    </location>
</feature>
<reference key="1">
    <citation type="journal article" date="2000" name="Proc. Natl. Acad. Sci. U.S.A.">
        <title>Post-symbiotic plasmid acquisition and evolution of the repA1-replicon in Buchnera aphidicola.</title>
        <authorList>
            <person name="Van Ham R.C.H.J."/>
            <person name="Gonzalez-Candelas F."/>
            <person name="Silva F.J."/>
            <person name="Sabater B."/>
            <person name="Moya A."/>
            <person name="Latorre A."/>
        </authorList>
    </citation>
    <scope>NUCLEOTIDE SEQUENCE [GENOMIC DNA]</scope>
</reference>
<proteinExistence type="inferred from homology"/>
<keyword id="KW-0143">Chaperone</keyword>
<keyword id="KW-0963">Cytoplasm</keyword>
<organism>
    <name type="scientific">Buchnera aphidicola subsp. Pemphigus spyrothecae</name>
    <dbReference type="NCBI Taxonomy" id="98799"/>
    <lineage>
        <taxon>Bacteria</taxon>
        <taxon>Pseudomonadati</taxon>
        <taxon>Pseudomonadota</taxon>
        <taxon>Gammaproteobacteria</taxon>
        <taxon>Enterobacterales</taxon>
        <taxon>Erwiniaceae</taxon>
        <taxon>Buchnera</taxon>
    </lineage>
</organism>